<evidence type="ECO:0000255" key="1">
    <source>
        <dbReference type="HAMAP-Rule" id="MF_00686"/>
    </source>
</evidence>
<name>FETP_LEGPL</name>
<comment type="function">
    <text evidence="1">Could be a mediator in iron transactions between iron acquisition and iron-requiring processes, such as synthesis and/or repair of Fe-S clusters in biosynthetic enzymes.</text>
</comment>
<comment type="similarity">
    <text evidence="1">Belongs to the Fe(2+)-trafficking protein family.</text>
</comment>
<protein>
    <recommendedName>
        <fullName evidence="1">Probable Fe(2+)-trafficking protein</fullName>
    </recommendedName>
</protein>
<accession>Q5WVC4</accession>
<dbReference type="EMBL" id="CR628337">
    <property type="protein sequence ID" value="CAH16130.1"/>
    <property type="molecule type" value="Genomic_DNA"/>
</dbReference>
<dbReference type="RefSeq" id="WP_011215888.1">
    <property type="nucleotide sequence ID" value="NC_006369.1"/>
</dbReference>
<dbReference type="SMR" id="Q5WVC4"/>
<dbReference type="KEGG" id="lpf:lpl1891"/>
<dbReference type="LegioList" id="lpl1891"/>
<dbReference type="HOGENOM" id="CLU_170994_0_0_6"/>
<dbReference type="Proteomes" id="UP000002517">
    <property type="component" value="Chromosome"/>
</dbReference>
<dbReference type="GO" id="GO:0005829">
    <property type="term" value="C:cytosol"/>
    <property type="evidence" value="ECO:0007669"/>
    <property type="project" value="TreeGrafter"/>
</dbReference>
<dbReference type="GO" id="GO:0005506">
    <property type="term" value="F:iron ion binding"/>
    <property type="evidence" value="ECO:0007669"/>
    <property type="project" value="UniProtKB-UniRule"/>
</dbReference>
<dbReference type="GO" id="GO:0034599">
    <property type="term" value="P:cellular response to oxidative stress"/>
    <property type="evidence" value="ECO:0007669"/>
    <property type="project" value="TreeGrafter"/>
</dbReference>
<dbReference type="FunFam" id="1.10.3880.10:FF:000001">
    <property type="entry name" value="Probable Fe(2+)-trafficking protein"/>
    <property type="match status" value="1"/>
</dbReference>
<dbReference type="Gene3D" id="1.10.3880.10">
    <property type="entry name" value="Fe(II) trafficking protein YggX"/>
    <property type="match status" value="1"/>
</dbReference>
<dbReference type="HAMAP" id="MF_00686">
    <property type="entry name" value="Fe_traffic_YggX"/>
    <property type="match status" value="1"/>
</dbReference>
<dbReference type="InterPro" id="IPR007457">
    <property type="entry name" value="Fe_traffick_prot_YggX"/>
</dbReference>
<dbReference type="InterPro" id="IPR036766">
    <property type="entry name" value="Fe_traffick_prot_YggX_sf"/>
</dbReference>
<dbReference type="NCBIfam" id="NF003817">
    <property type="entry name" value="PRK05408.1"/>
    <property type="match status" value="1"/>
</dbReference>
<dbReference type="PANTHER" id="PTHR36965">
    <property type="entry name" value="FE(2+)-TRAFFICKING PROTEIN-RELATED"/>
    <property type="match status" value="1"/>
</dbReference>
<dbReference type="PANTHER" id="PTHR36965:SF1">
    <property type="entry name" value="FE(2+)-TRAFFICKING PROTEIN-RELATED"/>
    <property type="match status" value="1"/>
</dbReference>
<dbReference type="Pfam" id="PF04362">
    <property type="entry name" value="Iron_traffic"/>
    <property type="match status" value="1"/>
</dbReference>
<dbReference type="PIRSF" id="PIRSF029827">
    <property type="entry name" value="Fe_traffic_YggX"/>
    <property type="match status" value="1"/>
</dbReference>
<dbReference type="SUPFAM" id="SSF111148">
    <property type="entry name" value="YggX-like"/>
    <property type="match status" value="1"/>
</dbReference>
<feature type="chain" id="PRO_0000214488" description="Probable Fe(2+)-trafficking protein">
    <location>
        <begin position="1"/>
        <end position="89"/>
    </location>
</feature>
<organism>
    <name type="scientific">Legionella pneumophila (strain Lens)</name>
    <dbReference type="NCBI Taxonomy" id="297245"/>
    <lineage>
        <taxon>Bacteria</taxon>
        <taxon>Pseudomonadati</taxon>
        <taxon>Pseudomonadota</taxon>
        <taxon>Gammaproteobacteria</taxon>
        <taxon>Legionellales</taxon>
        <taxon>Legionellaceae</taxon>
        <taxon>Legionella</taxon>
    </lineage>
</organism>
<reference key="1">
    <citation type="journal article" date="2004" name="Nat. Genet.">
        <title>Evidence in the Legionella pneumophila genome for exploitation of host cell functions and high genome plasticity.</title>
        <authorList>
            <person name="Cazalet C."/>
            <person name="Rusniok C."/>
            <person name="Brueggemann H."/>
            <person name="Zidane N."/>
            <person name="Magnier A."/>
            <person name="Ma L."/>
            <person name="Tichit M."/>
            <person name="Jarraud S."/>
            <person name="Bouchier C."/>
            <person name="Vandenesch F."/>
            <person name="Kunst F."/>
            <person name="Etienne J."/>
            <person name="Glaser P."/>
            <person name="Buchrieser C."/>
        </authorList>
    </citation>
    <scope>NUCLEOTIDE SEQUENCE [LARGE SCALE GENOMIC DNA]</scope>
    <source>
        <strain>Lens</strain>
    </source>
</reference>
<sequence length="89" mass="10525">MSRTVFCCKLKQEAEGLEKQPFPGELGKKVFNEVSKQAWNMWLSHQTMLINEYRLNLIEARAREFLKEEMQKYFFGEGSDKPSGYKEIK</sequence>
<gene>
    <name type="ordered locus">lpl1891</name>
</gene>
<keyword id="KW-0408">Iron</keyword>
<proteinExistence type="inferred from homology"/>